<protein>
    <recommendedName>
        <fullName evidence="1">Threonine--tRNA ligase</fullName>
        <ecNumber evidence="1">6.1.1.3</ecNumber>
    </recommendedName>
    <alternativeName>
        <fullName evidence="1">Threonyl-tRNA synthetase</fullName>
        <shortName evidence="1">ThrRS</shortName>
    </alternativeName>
</protein>
<name>SYT_BRUMB</name>
<keyword id="KW-0030">Aminoacyl-tRNA synthetase</keyword>
<keyword id="KW-0067">ATP-binding</keyword>
<keyword id="KW-0963">Cytoplasm</keyword>
<keyword id="KW-0436">Ligase</keyword>
<keyword id="KW-0479">Metal-binding</keyword>
<keyword id="KW-0547">Nucleotide-binding</keyword>
<keyword id="KW-0648">Protein biosynthesis</keyword>
<keyword id="KW-0694">RNA-binding</keyword>
<keyword id="KW-0820">tRNA-binding</keyword>
<keyword id="KW-0862">Zinc</keyword>
<evidence type="ECO:0000255" key="1">
    <source>
        <dbReference type="HAMAP-Rule" id="MF_00184"/>
    </source>
</evidence>
<evidence type="ECO:0000255" key="2">
    <source>
        <dbReference type="PROSITE-ProRule" id="PRU01228"/>
    </source>
</evidence>
<sequence>MSNTVSLQFPDGSVREYDASMTGAALAESISKSLAKKAVAYAVDGTVRDLSDPLGASGKVEIITREDPRALELIRHDTAHVLAEAVQELFPGTQVTIGPVIENGFYYDFARNEPFTLDDLPVIEKKMREIIQRNKPFTKEVWSREKAKQVFSDKGESYKVELVDAIPAGQDLKIYYQGDWFDLCRGPHMASTGQIGNSFKLMKVAGAYWRGDANNPMLTRIYGTAFANDNDLQAYLHMLEEAEKRDHRRLGREMDLFHFQEEGPGVVFWHAKGWKMFQNLVSYMRRRLDSHGYQEVNTPQVLDKSLWETSGHWGWYRDNMFKVTVAGDDTDDDRVFALKPMNCPGHVQIFKHGLKSYRDLPIKLAEFGNVHRYEPSGALHGLMRVRGFTQDDAHIFCTEEQMAAECLQINDHILSVYKDFGFEEITIKLSTRPEKRVGSDELWDRAESVMMTVLEQIRQQSNNIKTGILPGEGAFYGPKFEYTLKDAIGREWQCGTTQVDFNLPERFGAFYIGADSEKKQPVMIHRAICGSMERFLGILIENFAGHMPLWFAPVQVVVATITSDADEYAKEAAAKLKAAGLQVVTDLRNEKINYKVREHSLQKVPVILVCGKREAEEKTVNMRRLGSRDQESMTLDEAIARLCEEATPPDLLRLKNAG</sequence>
<feature type="chain" id="PRO_1000199532" description="Threonine--tRNA ligase">
    <location>
        <begin position="1"/>
        <end position="658"/>
    </location>
</feature>
<feature type="domain" description="TGS" evidence="2">
    <location>
        <begin position="1"/>
        <end position="64"/>
    </location>
</feature>
<feature type="region of interest" description="Catalytic" evidence="1">
    <location>
        <begin position="246"/>
        <end position="548"/>
    </location>
</feature>
<feature type="binding site" evidence="1">
    <location>
        <position position="343"/>
    </location>
    <ligand>
        <name>Zn(2+)</name>
        <dbReference type="ChEBI" id="CHEBI:29105"/>
    </ligand>
</feature>
<feature type="binding site" evidence="1">
    <location>
        <position position="394"/>
    </location>
    <ligand>
        <name>Zn(2+)</name>
        <dbReference type="ChEBI" id="CHEBI:29105"/>
    </ligand>
</feature>
<feature type="binding site" evidence="1">
    <location>
        <position position="525"/>
    </location>
    <ligand>
        <name>Zn(2+)</name>
        <dbReference type="ChEBI" id="CHEBI:29105"/>
    </ligand>
</feature>
<reference key="1">
    <citation type="submission" date="2009-03" db="EMBL/GenBank/DDBJ databases">
        <title>Brucella melitensis ATCC 23457 whole genome shotgun sequencing project.</title>
        <authorList>
            <person name="Setubal J.C."/>
            <person name="Boyle S."/>
            <person name="Crasta O.R."/>
            <person name="Gillespie J.J."/>
            <person name="Kenyon R.W."/>
            <person name="Lu J."/>
            <person name="Mane S."/>
            <person name="Nagrani S."/>
            <person name="Shallom J.M."/>
            <person name="Shallom S."/>
            <person name="Shukla M."/>
            <person name="Snyder E.E."/>
            <person name="Sobral B.W."/>
            <person name="Wattam A.R."/>
            <person name="Will R."/>
            <person name="Williams K."/>
            <person name="Yoo H."/>
            <person name="Munk C."/>
            <person name="Tapia R."/>
            <person name="Han C."/>
            <person name="Detter J.C."/>
            <person name="Bruce D."/>
            <person name="Brettin T.S."/>
        </authorList>
    </citation>
    <scope>NUCLEOTIDE SEQUENCE [LARGE SCALE GENOMIC DNA]</scope>
    <source>
        <strain>ATCC 23457</strain>
    </source>
</reference>
<dbReference type="EC" id="6.1.1.3" evidence="1"/>
<dbReference type="EMBL" id="CP001488">
    <property type="protein sequence ID" value="ACO00852.1"/>
    <property type="molecule type" value="Genomic_DNA"/>
</dbReference>
<dbReference type="RefSeq" id="WP_004686437.1">
    <property type="nucleotide sequence ID" value="NC_012441.1"/>
</dbReference>
<dbReference type="SMR" id="C0RJ44"/>
<dbReference type="KEGG" id="bmi:BMEA_A1112"/>
<dbReference type="HOGENOM" id="CLU_008554_0_1_5"/>
<dbReference type="Proteomes" id="UP000001748">
    <property type="component" value="Chromosome I"/>
</dbReference>
<dbReference type="GO" id="GO:0005829">
    <property type="term" value="C:cytosol"/>
    <property type="evidence" value="ECO:0007669"/>
    <property type="project" value="TreeGrafter"/>
</dbReference>
<dbReference type="GO" id="GO:0005524">
    <property type="term" value="F:ATP binding"/>
    <property type="evidence" value="ECO:0007669"/>
    <property type="project" value="UniProtKB-UniRule"/>
</dbReference>
<dbReference type="GO" id="GO:0046872">
    <property type="term" value="F:metal ion binding"/>
    <property type="evidence" value="ECO:0007669"/>
    <property type="project" value="UniProtKB-KW"/>
</dbReference>
<dbReference type="GO" id="GO:0004829">
    <property type="term" value="F:threonine-tRNA ligase activity"/>
    <property type="evidence" value="ECO:0007669"/>
    <property type="project" value="UniProtKB-UniRule"/>
</dbReference>
<dbReference type="GO" id="GO:0000049">
    <property type="term" value="F:tRNA binding"/>
    <property type="evidence" value="ECO:0007669"/>
    <property type="project" value="UniProtKB-KW"/>
</dbReference>
<dbReference type="GO" id="GO:0006435">
    <property type="term" value="P:threonyl-tRNA aminoacylation"/>
    <property type="evidence" value="ECO:0007669"/>
    <property type="project" value="UniProtKB-UniRule"/>
</dbReference>
<dbReference type="CDD" id="cd01667">
    <property type="entry name" value="TGS_ThrRS"/>
    <property type="match status" value="1"/>
</dbReference>
<dbReference type="CDD" id="cd00860">
    <property type="entry name" value="ThrRS_anticodon"/>
    <property type="match status" value="1"/>
</dbReference>
<dbReference type="CDD" id="cd00771">
    <property type="entry name" value="ThrRS_core"/>
    <property type="match status" value="1"/>
</dbReference>
<dbReference type="FunFam" id="3.30.54.20:FF:000002">
    <property type="entry name" value="Threonine--tRNA ligase"/>
    <property type="match status" value="1"/>
</dbReference>
<dbReference type="FunFam" id="3.30.930.10:FF:000002">
    <property type="entry name" value="Threonine--tRNA ligase"/>
    <property type="match status" value="1"/>
</dbReference>
<dbReference type="FunFam" id="3.40.50.800:FF:000001">
    <property type="entry name" value="Threonine--tRNA ligase"/>
    <property type="match status" value="1"/>
</dbReference>
<dbReference type="FunFam" id="3.30.980.10:FF:000005">
    <property type="entry name" value="Threonyl-tRNA synthetase, mitochondrial"/>
    <property type="match status" value="1"/>
</dbReference>
<dbReference type="Gene3D" id="3.10.20.30">
    <property type="match status" value="1"/>
</dbReference>
<dbReference type="Gene3D" id="3.30.54.20">
    <property type="match status" value="1"/>
</dbReference>
<dbReference type="Gene3D" id="3.40.50.800">
    <property type="entry name" value="Anticodon-binding domain"/>
    <property type="match status" value="1"/>
</dbReference>
<dbReference type="Gene3D" id="3.30.930.10">
    <property type="entry name" value="Bira Bifunctional Protein, Domain 2"/>
    <property type="match status" value="1"/>
</dbReference>
<dbReference type="Gene3D" id="3.30.980.10">
    <property type="entry name" value="Threonyl-trna Synthetase, Chain A, domain 2"/>
    <property type="match status" value="1"/>
</dbReference>
<dbReference type="HAMAP" id="MF_00184">
    <property type="entry name" value="Thr_tRNA_synth"/>
    <property type="match status" value="1"/>
</dbReference>
<dbReference type="InterPro" id="IPR002314">
    <property type="entry name" value="aa-tRNA-synt_IIb"/>
</dbReference>
<dbReference type="InterPro" id="IPR006195">
    <property type="entry name" value="aa-tRNA-synth_II"/>
</dbReference>
<dbReference type="InterPro" id="IPR045864">
    <property type="entry name" value="aa-tRNA-synth_II/BPL/LPL"/>
</dbReference>
<dbReference type="InterPro" id="IPR004154">
    <property type="entry name" value="Anticodon-bd"/>
</dbReference>
<dbReference type="InterPro" id="IPR036621">
    <property type="entry name" value="Anticodon-bd_dom_sf"/>
</dbReference>
<dbReference type="InterPro" id="IPR012675">
    <property type="entry name" value="Beta-grasp_dom_sf"/>
</dbReference>
<dbReference type="InterPro" id="IPR004095">
    <property type="entry name" value="TGS"/>
</dbReference>
<dbReference type="InterPro" id="IPR012676">
    <property type="entry name" value="TGS-like"/>
</dbReference>
<dbReference type="InterPro" id="IPR002320">
    <property type="entry name" value="Thr-tRNA-ligase_IIa"/>
</dbReference>
<dbReference type="InterPro" id="IPR018163">
    <property type="entry name" value="Thr/Ala-tRNA-synth_IIc_edit"/>
</dbReference>
<dbReference type="InterPro" id="IPR047246">
    <property type="entry name" value="ThrRS_anticodon"/>
</dbReference>
<dbReference type="InterPro" id="IPR033728">
    <property type="entry name" value="ThrRS_core"/>
</dbReference>
<dbReference type="InterPro" id="IPR012947">
    <property type="entry name" value="tRNA_SAD"/>
</dbReference>
<dbReference type="NCBIfam" id="TIGR00418">
    <property type="entry name" value="thrS"/>
    <property type="match status" value="1"/>
</dbReference>
<dbReference type="PANTHER" id="PTHR11451:SF44">
    <property type="entry name" value="THREONINE--TRNA LIGASE, CHLOROPLASTIC_MITOCHONDRIAL 2"/>
    <property type="match status" value="1"/>
</dbReference>
<dbReference type="PANTHER" id="PTHR11451">
    <property type="entry name" value="THREONINE-TRNA LIGASE"/>
    <property type="match status" value="1"/>
</dbReference>
<dbReference type="Pfam" id="PF03129">
    <property type="entry name" value="HGTP_anticodon"/>
    <property type="match status" value="1"/>
</dbReference>
<dbReference type="Pfam" id="PF02824">
    <property type="entry name" value="TGS"/>
    <property type="match status" value="1"/>
</dbReference>
<dbReference type="Pfam" id="PF00587">
    <property type="entry name" value="tRNA-synt_2b"/>
    <property type="match status" value="1"/>
</dbReference>
<dbReference type="Pfam" id="PF07973">
    <property type="entry name" value="tRNA_SAD"/>
    <property type="match status" value="1"/>
</dbReference>
<dbReference type="PRINTS" id="PR01047">
    <property type="entry name" value="TRNASYNTHTHR"/>
</dbReference>
<dbReference type="SMART" id="SM00863">
    <property type="entry name" value="tRNA_SAD"/>
    <property type="match status" value="1"/>
</dbReference>
<dbReference type="SUPFAM" id="SSF52954">
    <property type="entry name" value="Class II aaRS ABD-related"/>
    <property type="match status" value="1"/>
</dbReference>
<dbReference type="SUPFAM" id="SSF55681">
    <property type="entry name" value="Class II aaRS and biotin synthetases"/>
    <property type="match status" value="1"/>
</dbReference>
<dbReference type="SUPFAM" id="SSF81271">
    <property type="entry name" value="TGS-like"/>
    <property type="match status" value="1"/>
</dbReference>
<dbReference type="SUPFAM" id="SSF55186">
    <property type="entry name" value="ThrRS/AlaRS common domain"/>
    <property type="match status" value="1"/>
</dbReference>
<dbReference type="PROSITE" id="PS50862">
    <property type="entry name" value="AA_TRNA_LIGASE_II"/>
    <property type="match status" value="1"/>
</dbReference>
<dbReference type="PROSITE" id="PS51880">
    <property type="entry name" value="TGS"/>
    <property type="match status" value="1"/>
</dbReference>
<comment type="function">
    <text evidence="1">Catalyzes the attachment of threonine to tRNA(Thr) in a two-step reaction: L-threonine is first activated by ATP to form Thr-AMP and then transferred to the acceptor end of tRNA(Thr). Also edits incorrectly charged L-seryl-tRNA(Thr).</text>
</comment>
<comment type="catalytic activity">
    <reaction evidence="1">
        <text>tRNA(Thr) + L-threonine + ATP = L-threonyl-tRNA(Thr) + AMP + diphosphate + H(+)</text>
        <dbReference type="Rhea" id="RHEA:24624"/>
        <dbReference type="Rhea" id="RHEA-COMP:9670"/>
        <dbReference type="Rhea" id="RHEA-COMP:9704"/>
        <dbReference type="ChEBI" id="CHEBI:15378"/>
        <dbReference type="ChEBI" id="CHEBI:30616"/>
        <dbReference type="ChEBI" id="CHEBI:33019"/>
        <dbReference type="ChEBI" id="CHEBI:57926"/>
        <dbReference type="ChEBI" id="CHEBI:78442"/>
        <dbReference type="ChEBI" id="CHEBI:78534"/>
        <dbReference type="ChEBI" id="CHEBI:456215"/>
        <dbReference type="EC" id="6.1.1.3"/>
    </reaction>
</comment>
<comment type="cofactor">
    <cofactor evidence="1">
        <name>Zn(2+)</name>
        <dbReference type="ChEBI" id="CHEBI:29105"/>
    </cofactor>
    <text evidence="1">Binds 1 zinc ion per subunit.</text>
</comment>
<comment type="subunit">
    <text evidence="1">Homodimer.</text>
</comment>
<comment type="subcellular location">
    <subcellularLocation>
        <location evidence="1">Cytoplasm</location>
    </subcellularLocation>
</comment>
<comment type="similarity">
    <text evidence="1">Belongs to the class-II aminoacyl-tRNA synthetase family.</text>
</comment>
<proteinExistence type="inferred from homology"/>
<accession>C0RJ44</accession>
<gene>
    <name evidence="1" type="primary">thrS</name>
    <name type="ordered locus">BMEA_A1112</name>
</gene>
<organism>
    <name type="scientific">Brucella melitensis biotype 2 (strain ATCC 23457)</name>
    <dbReference type="NCBI Taxonomy" id="546272"/>
    <lineage>
        <taxon>Bacteria</taxon>
        <taxon>Pseudomonadati</taxon>
        <taxon>Pseudomonadota</taxon>
        <taxon>Alphaproteobacteria</taxon>
        <taxon>Hyphomicrobiales</taxon>
        <taxon>Brucellaceae</taxon>
        <taxon>Brucella/Ochrobactrum group</taxon>
        <taxon>Brucella</taxon>
    </lineage>
</organism>